<comment type="catalytic activity">
    <reaction evidence="1">
        <text>D-ribulose + ATP = D-ribulose 5-phosphate + ADP + H(+)</text>
        <dbReference type="Rhea" id="RHEA:17601"/>
        <dbReference type="ChEBI" id="CHEBI:15378"/>
        <dbReference type="ChEBI" id="CHEBI:17173"/>
        <dbReference type="ChEBI" id="CHEBI:30616"/>
        <dbReference type="ChEBI" id="CHEBI:58121"/>
        <dbReference type="ChEBI" id="CHEBI:456216"/>
        <dbReference type="EC" id="2.7.1.16"/>
    </reaction>
</comment>
<comment type="catalytic activity">
    <reaction evidence="1">
        <text>L-ribulose + ATP = L-ribulose 5-phosphate + ADP + H(+)</text>
        <dbReference type="Rhea" id="RHEA:22072"/>
        <dbReference type="ChEBI" id="CHEBI:15378"/>
        <dbReference type="ChEBI" id="CHEBI:16880"/>
        <dbReference type="ChEBI" id="CHEBI:30616"/>
        <dbReference type="ChEBI" id="CHEBI:58226"/>
        <dbReference type="ChEBI" id="CHEBI:456216"/>
        <dbReference type="EC" id="2.7.1.16"/>
    </reaction>
</comment>
<comment type="pathway">
    <text evidence="1">Carbohydrate degradation; L-arabinose degradation via L-ribulose; D-xylulose 5-phosphate from L-arabinose (bacterial route): step 2/3.</text>
</comment>
<comment type="similarity">
    <text evidence="1">Belongs to the ribulokinase family.</text>
</comment>
<evidence type="ECO:0000255" key="1">
    <source>
        <dbReference type="HAMAP-Rule" id="MF_00520"/>
    </source>
</evidence>
<gene>
    <name evidence="1" type="primary">araB</name>
    <name type="ordered locus">ETA_17710</name>
</gene>
<dbReference type="EC" id="2.7.1.16" evidence="1"/>
<dbReference type="EMBL" id="CU468135">
    <property type="protein sequence ID" value="CAO96817.1"/>
    <property type="molecule type" value="Genomic_DNA"/>
</dbReference>
<dbReference type="RefSeq" id="WP_012441506.1">
    <property type="nucleotide sequence ID" value="NC_010694.1"/>
</dbReference>
<dbReference type="SMR" id="B2VEQ9"/>
<dbReference type="STRING" id="465817.ETA_17710"/>
<dbReference type="KEGG" id="eta:ETA_17710"/>
<dbReference type="eggNOG" id="COG1069">
    <property type="taxonomic scope" value="Bacteria"/>
</dbReference>
<dbReference type="HOGENOM" id="CLU_009281_9_1_6"/>
<dbReference type="OrthoDB" id="9805576at2"/>
<dbReference type="UniPathway" id="UPA00145">
    <property type="reaction ID" value="UER00566"/>
</dbReference>
<dbReference type="Proteomes" id="UP000001726">
    <property type="component" value="Chromosome"/>
</dbReference>
<dbReference type="GO" id="GO:0005737">
    <property type="term" value="C:cytoplasm"/>
    <property type="evidence" value="ECO:0007669"/>
    <property type="project" value="TreeGrafter"/>
</dbReference>
<dbReference type="GO" id="GO:0005524">
    <property type="term" value="F:ATP binding"/>
    <property type="evidence" value="ECO:0007669"/>
    <property type="project" value="UniProtKB-KW"/>
</dbReference>
<dbReference type="GO" id="GO:0019150">
    <property type="term" value="F:D-ribulokinase activity"/>
    <property type="evidence" value="ECO:0007669"/>
    <property type="project" value="RHEA"/>
</dbReference>
<dbReference type="GO" id="GO:0008741">
    <property type="term" value="F:ribulokinase activity"/>
    <property type="evidence" value="ECO:0007669"/>
    <property type="project" value="UniProtKB-UniRule"/>
</dbReference>
<dbReference type="GO" id="GO:0019569">
    <property type="term" value="P:L-arabinose catabolic process to xylulose 5-phosphate"/>
    <property type="evidence" value="ECO:0007669"/>
    <property type="project" value="UniProtKB-UniRule"/>
</dbReference>
<dbReference type="CDD" id="cd07781">
    <property type="entry name" value="ASKHA_NBD_FGGY_L-RBK"/>
    <property type="match status" value="1"/>
</dbReference>
<dbReference type="Gene3D" id="1.20.58.2240">
    <property type="match status" value="1"/>
</dbReference>
<dbReference type="Gene3D" id="3.30.420.40">
    <property type="match status" value="1"/>
</dbReference>
<dbReference type="HAMAP" id="MF_00520">
    <property type="entry name" value="Ribulokinase"/>
    <property type="match status" value="1"/>
</dbReference>
<dbReference type="InterPro" id="IPR043129">
    <property type="entry name" value="ATPase_NBD"/>
</dbReference>
<dbReference type="InterPro" id="IPR018485">
    <property type="entry name" value="FGGY_C"/>
</dbReference>
<dbReference type="InterPro" id="IPR005929">
    <property type="entry name" value="Ribulokinase"/>
</dbReference>
<dbReference type="NCBIfam" id="TIGR01234">
    <property type="entry name" value="L-ribulokinase"/>
    <property type="match status" value="1"/>
</dbReference>
<dbReference type="NCBIfam" id="NF003154">
    <property type="entry name" value="PRK04123.1"/>
    <property type="match status" value="1"/>
</dbReference>
<dbReference type="PANTHER" id="PTHR43435:SF4">
    <property type="entry name" value="FGGY CARBOHYDRATE KINASE DOMAIN-CONTAINING PROTEIN"/>
    <property type="match status" value="1"/>
</dbReference>
<dbReference type="PANTHER" id="PTHR43435">
    <property type="entry name" value="RIBULOKINASE"/>
    <property type="match status" value="1"/>
</dbReference>
<dbReference type="Pfam" id="PF02782">
    <property type="entry name" value="FGGY_C"/>
    <property type="match status" value="1"/>
</dbReference>
<dbReference type="SUPFAM" id="SSF53067">
    <property type="entry name" value="Actin-like ATPase domain"/>
    <property type="match status" value="2"/>
</dbReference>
<sequence>MYKGAITLGLDFGSDSVRALAVECATGRELHKQAAAYPRWQDGRYCLPARNQFRHHPQDYIDAMERAVRDVVTKLTPQQRRDVVGIGVDSTGSTPAPIDRQGRVLALRPEFADNPNAMFVLWKDHTAIEEAEAITQLCRSGEYQDYSRFVGGVYSSEWFWAKILHISHVDEAVRDAAVSWVELCDWVPALLSGTTAPGDLKRGRCAAGHKSLWHPLWHGLPQASFLNALDPLLTRSLDYPLFQDTWTADRPVGTLSREWAARLGLPEDVVISGGAFDCHMGAVGAGARPYTLVKVIGTSTCDIMIADAQRVADRTINGICGQVDGSVVPGMIGLEAGQSAFGDMYAWFSRLLGWPLVQAARQQPALSQQFEHVRETLLEDLTTAWAADPQLNHLPVVLDWFNGRRTPFANQRLKGTIADLNLGTDAPALFGGFIAATAFGARTIMECFDQQDLPVQQILALGGIARKSPVIMQVCCDVMNRPLSIVASDECCALGAAIFAAVAAGVYQNIPEAQKRMASPLAQTLQPDPERVLRFQPLYQRYLDWCRIAEPLFAPAPLSVSKE</sequence>
<name>ARAB_ERWT9</name>
<reference key="1">
    <citation type="journal article" date="2008" name="Environ. Microbiol.">
        <title>The genome of Erwinia tasmaniensis strain Et1/99, a non-pathogenic bacterium in the genus Erwinia.</title>
        <authorList>
            <person name="Kube M."/>
            <person name="Migdoll A.M."/>
            <person name="Mueller I."/>
            <person name="Kuhl H."/>
            <person name="Beck A."/>
            <person name="Reinhardt R."/>
            <person name="Geider K."/>
        </authorList>
    </citation>
    <scope>NUCLEOTIDE SEQUENCE [LARGE SCALE GENOMIC DNA]</scope>
    <source>
        <strain>DSM 17950 / CFBP 7177 / CIP 109463 / NCPPB 4357 / Et1/99</strain>
    </source>
</reference>
<accession>B2VEQ9</accession>
<proteinExistence type="inferred from homology"/>
<keyword id="KW-0054">Arabinose catabolism</keyword>
<keyword id="KW-0067">ATP-binding</keyword>
<keyword id="KW-0119">Carbohydrate metabolism</keyword>
<keyword id="KW-0418">Kinase</keyword>
<keyword id="KW-0547">Nucleotide-binding</keyword>
<keyword id="KW-1185">Reference proteome</keyword>
<keyword id="KW-0808">Transferase</keyword>
<organism>
    <name type="scientific">Erwinia tasmaniensis (strain DSM 17950 / CFBP 7177 / CIP 109463 / NCPPB 4357 / Et1/99)</name>
    <dbReference type="NCBI Taxonomy" id="465817"/>
    <lineage>
        <taxon>Bacteria</taxon>
        <taxon>Pseudomonadati</taxon>
        <taxon>Pseudomonadota</taxon>
        <taxon>Gammaproteobacteria</taxon>
        <taxon>Enterobacterales</taxon>
        <taxon>Erwiniaceae</taxon>
        <taxon>Erwinia</taxon>
    </lineage>
</organism>
<feature type="chain" id="PRO_1000127633" description="Ribulokinase">
    <location>
        <begin position="1"/>
        <end position="563"/>
    </location>
</feature>
<protein>
    <recommendedName>
        <fullName evidence="1">Ribulokinase</fullName>
        <ecNumber evidence="1">2.7.1.16</ecNumber>
    </recommendedName>
</protein>